<gene>
    <name evidence="12" type="primary">mep-1</name>
    <name type="ORF">M04B2.1</name>
</gene>
<protein>
    <recommendedName>
        <fullName>MOG interacting and ectopic P-granules protein 1</fullName>
    </recommendedName>
    <alternativeName>
        <fullName>Nuclear zinc finger protein</fullName>
    </alternativeName>
</protein>
<dbReference type="EMBL" id="AF416567">
    <property type="protein sequence ID" value="AAL27004.1"/>
    <property type="molecule type" value="mRNA"/>
</dbReference>
<dbReference type="EMBL" id="Z77667">
    <property type="protein sequence ID" value="CAB01235.2"/>
    <property type="molecule type" value="Genomic_DNA"/>
</dbReference>
<dbReference type="PIR" id="T23697">
    <property type="entry name" value="T23697"/>
</dbReference>
<dbReference type="RefSeq" id="NP_502173.2">
    <property type="nucleotide sequence ID" value="NM_069772.6"/>
</dbReference>
<dbReference type="BioGRID" id="43171">
    <property type="interactions" value="46"/>
</dbReference>
<dbReference type="FunCoup" id="Q21502">
    <property type="interactions" value="626"/>
</dbReference>
<dbReference type="IntAct" id="Q21502">
    <property type="interactions" value="31"/>
</dbReference>
<dbReference type="MINT" id="Q21502"/>
<dbReference type="STRING" id="6239.M04B2.1.1"/>
<dbReference type="PaxDb" id="6239-M04B2.1"/>
<dbReference type="PeptideAtlas" id="Q21502"/>
<dbReference type="EnsemblMetazoa" id="M04B2.1.1">
    <property type="protein sequence ID" value="M04B2.1.1"/>
    <property type="gene ID" value="WBGene00003218"/>
</dbReference>
<dbReference type="GeneID" id="178074"/>
<dbReference type="KEGG" id="cel:CELE_M04B2.1"/>
<dbReference type="UCSC" id="M04B2.1">
    <property type="organism name" value="c. elegans"/>
</dbReference>
<dbReference type="AGR" id="WB:WBGene00003218"/>
<dbReference type="CTD" id="38327"/>
<dbReference type="WormBase" id="M04B2.1">
    <property type="protein sequence ID" value="CE31852"/>
    <property type="gene ID" value="WBGene00003218"/>
    <property type="gene designation" value="mep-1"/>
</dbReference>
<dbReference type="eggNOG" id="ENOG502QQXF">
    <property type="taxonomic scope" value="Eukaryota"/>
</dbReference>
<dbReference type="GeneTree" id="ENSGT00390000000042"/>
<dbReference type="HOGENOM" id="CLU_017465_0_0_1"/>
<dbReference type="InParanoid" id="Q21502"/>
<dbReference type="OMA" id="YSDIVHA"/>
<dbReference type="OrthoDB" id="6110130at2759"/>
<dbReference type="PhylomeDB" id="Q21502"/>
<dbReference type="SignaLink" id="Q21502"/>
<dbReference type="PRO" id="PR:Q21502"/>
<dbReference type="Proteomes" id="UP000001940">
    <property type="component" value="Chromosome IV"/>
</dbReference>
<dbReference type="Bgee" id="WBGene00003218">
    <property type="expression patterns" value="Expressed in pharyngeal muscle cell (C elegans) and 4 other cell types or tissues"/>
</dbReference>
<dbReference type="GO" id="GO:0005634">
    <property type="term" value="C:nucleus"/>
    <property type="evidence" value="ECO:0000314"/>
    <property type="project" value="UniProtKB"/>
</dbReference>
<dbReference type="GO" id="GO:0017151">
    <property type="term" value="F:DEAD/H-box RNA helicase binding"/>
    <property type="evidence" value="ECO:0000353"/>
    <property type="project" value="UniProtKB"/>
</dbReference>
<dbReference type="GO" id="GO:0042826">
    <property type="term" value="F:histone deacetylase binding"/>
    <property type="evidence" value="ECO:0000353"/>
    <property type="project" value="UniProtKB"/>
</dbReference>
<dbReference type="GO" id="GO:0042802">
    <property type="term" value="F:identical protein binding"/>
    <property type="evidence" value="ECO:0000353"/>
    <property type="project" value="IntAct"/>
</dbReference>
<dbReference type="GO" id="GO:0003723">
    <property type="term" value="F:RNA binding"/>
    <property type="evidence" value="ECO:0000314"/>
    <property type="project" value="WormBase"/>
</dbReference>
<dbReference type="GO" id="GO:0008270">
    <property type="term" value="F:zinc ion binding"/>
    <property type="evidence" value="ECO:0007669"/>
    <property type="project" value="UniProtKB-KW"/>
</dbReference>
<dbReference type="GO" id="GO:0008406">
    <property type="term" value="P:gonad development"/>
    <property type="evidence" value="ECO:0000315"/>
    <property type="project" value="WormBase"/>
</dbReference>
<dbReference type="GO" id="GO:0007506">
    <property type="term" value="P:gonadal mesoderm development"/>
    <property type="evidence" value="ECO:0007669"/>
    <property type="project" value="UniProtKB-KW"/>
</dbReference>
<dbReference type="GO" id="GO:0002119">
    <property type="term" value="P:nematode larval development"/>
    <property type="evidence" value="ECO:0000315"/>
    <property type="project" value="UniProtKB"/>
</dbReference>
<dbReference type="GO" id="GO:0048599">
    <property type="term" value="P:oocyte development"/>
    <property type="evidence" value="ECO:0000315"/>
    <property type="project" value="WormBase"/>
</dbReference>
<dbReference type="GO" id="GO:0010628">
    <property type="term" value="P:positive regulation of gene expression"/>
    <property type="evidence" value="ECO:0000315"/>
    <property type="project" value="UniProtKB"/>
</dbReference>
<dbReference type="GO" id="GO:0045944">
    <property type="term" value="P:positive regulation of transcription by RNA polymerase II"/>
    <property type="evidence" value="ECO:0000318"/>
    <property type="project" value="GO_Central"/>
</dbReference>
<dbReference type="GO" id="GO:0010468">
    <property type="term" value="P:regulation of gene expression"/>
    <property type="evidence" value="ECO:0000315"/>
    <property type="project" value="WormBase"/>
</dbReference>
<dbReference type="GO" id="GO:0040025">
    <property type="term" value="P:vulval development"/>
    <property type="evidence" value="ECO:0000315"/>
    <property type="project" value="WormBase"/>
</dbReference>
<dbReference type="FunFam" id="3.30.160.60:FF:001612">
    <property type="entry name" value="MEP-1, isoform A"/>
    <property type="match status" value="1"/>
</dbReference>
<dbReference type="Gene3D" id="3.30.160.60">
    <property type="entry name" value="Classic Zinc Finger"/>
    <property type="match status" value="1"/>
</dbReference>
<dbReference type="InterPro" id="IPR013087">
    <property type="entry name" value="Znf_C2H2_type"/>
</dbReference>
<dbReference type="PANTHER" id="PTHR24409:SF295">
    <property type="entry name" value="AZ2-RELATED"/>
    <property type="match status" value="1"/>
</dbReference>
<dbReference type="PANTHER" id="PTHR24409">
    <property type="entry name" value="ZINC FINGER PROTEIN 142"/>
    <property type="match status" value="1"/>
</dbReference>
<dbReference type="SMART" id="SM00355">
    <property type="entry name" value="ZnF_C2H2"/>
    <property type="match status" value="7"/>
</dbReference>
<dbReference type="PROSITE" id="PS00028">
    <property type="entry name" value="ZINC_FINGER_C2H2_1"/>
    <property type="match status" value="3"/>
</dbReference>
<comment type="function">
    <text evidence="3 4">Has a broad role in development, specifically in the genetic pathway SynMuvB that negatively regulates specification of the vulval cell fate. Required for fem-3 3'-UTR-mediated repression in the regulation of the sperm/oocyte switch. Acts by regulating the translation of fem-3 mRNA, by binding to its 3'-UTR.</text>
</comment>
<comment type="subunit">
    <text evidence="3 4 5 6 7">Interacts with hda-1, let-418, lin-1, mog-1, mog-4, mog-5, mog-6, pie-1 and unc-98.</text>
</comment>
<comment type="interaction">
    <interactant intactId="EBI-319858">
        <id>Q21502</id>
    </interactant>
    <interactant intactId="EBI-3513766">
        <id>P52012</id>
        <label>cyn-4</label>
    </interactant>
    <organismsDiffer>false</organismsDiffer>
    <experiments>3</experiments>
</comment>
<comment type="interaction">
    <interactant intactId="EBI-319858">
        <id>Q21502</id>
    </interactant>
    <interactant intactId="EBI-3831970">
        <id>G5EBZ4</id>
        <label>let-418</label>
    </interactant>
    <organismsDiffer>false</organismsDiffer>
    <experiments>2</experiments>
</comment>
<comment type="interaction">
    <interactant intactId="EBI-319858">
        <id>Q21502</id>
    </interactant>
    <interactant intactId="EBI-319858">
        <id>Q21502</id>
        <label>mep-1</label>
    </interactant>
    <organismsDiffer>false</organismsDiffer>
    <experiments>3</experiments>
</comment>
<comment type="interaction">
    <interactant intactId="EBI-319858">
        <id>Q21502</id>
    </interactant>
    <interactant intactId="EBI-3651301">
        <id>P34498</id>
        <label>mog-1</label>
    </interactant>
    <organismsDiffer>false</organismsDiffer>
    <experiments>3</experiments>
</comment>
<comment type="interaction">
    <interactant intactId="EBI-319858">
        <id>Q21502</id>
    </interactant>
    <interactant intactId="EBI-2418038">
        <id>G5EBT5</id>
        <label>mog-3</label>
    </interactant>
    <organismsDiffer>false</organismsDiffer>
    <experiments>2</experiments>
</comment>
<comment type="interaction">
    <interactant intactId="EBI-319858">
        <id>Q21502</id>
    </interactant>
    <interactant intactId="EBI-326143">
        <id>O45244</id>
        <label>mog-4</label>
    </interactant>
    <organismsDiffer>false</organismsDiffer>
    <experiments>2</experiments>
</comment>
<comment type="interaction">
    <interactant intactId="EBI-319858">
        <id>Q21502</id>
    </interactant>
    <interactant intactId="EBI-329912">
        <id>Q09530</id>
        <label>mog-5</label>
    </interactant>
    <organismsDiffer>false</organismsDiffer>
    <experiments>3</experiments>
</comment>
<comment type="interaction">
    <interactant intactId="EBI-319858">
        <id>Q21502</id>
    </interactant>
    <interactant intactId="EBI-300501">
        <id>Q94131</id>
        <label>pie-1</label>
    </interactant>
    <organismsDiffer>false</organismsDiffer>
    <experiments>3</experiments>
</comment>
<comment type="subcellular location">
    <subcellularLocation>
        <location evidence="3">Nucleus</location>
    </subcellularLocation>
    <text evidence="3">Found in all nuclei in the germline, including oocytes, but not those of mature sperm and spermatocytes.</text>
</comment>
<comment type="tissue specificity">
    <text evidence="3">Expressed in somatic cells of embryos, the head, hypodermis and tail of larvae and the germline of adults, including oocytes but not mature sperm and spermatocytes.</text>
</comment>
<comment type="developmental stage">
    <text evidence="3">Expressed both maternally and zygotically. Expressed in all developmental stages; highest in embryos, decreasing during early larval development (L1-L3) until the fourth larval stage (L4) where it increases. Expression in hermaphrodite adults is mostly contained to the germline.</text>
</comment>
<comment type="PTM">
    <text evidence="8">Sumoylated.</text>
</comment>
<comment type="disruption phenotype">
    <text evidence="3">Worms exhibit temperature-dependent arrested elongation of gonadal arms. Mutants raised at 25 degrees C show reduced numbers of descendants of the gonadal precursors Z1 and Z4, while mutants raised at 15 degrees C show wild type gonadal development. Vulval defects are also temperature sensitive. Mutants grown at 20 degrees C showed protruding vulva (80%) and some had pseudovulvae (15%). At 15 degrees C, fewer mutants exhibited everted (36%) or additional small vulvae (7%).</text>
</comment>
<accession>Q21502</accession>
<accession>Q95VF1</accession>
<evidence type="ECO:0000255" key="1"/>
<evidence type="ECO:0000256" key="2">
    <source>
        <dbReference type="SAM" id="MobiDB-lite"/>
    </source>
</evidence>
<evidence type="ECO:0000269" key="3">
    <source>
    </source>
</evidence>
<evidence type="ECO:0000269" key="4">
    <source>
    </source>
</evidence>
<evidence type="ECO:0000269" key="5">
    <source>
    </source>
</evidence>
<evidence type="ECO:0000269" key="6">
    <source>
    </source>
</evidence>
<evidence type="ECO:0000269" key="7">
    <source>
    </source>
</evidence>
<evidence type="ECO:0000269" key="8">
    <source>
    </source>
</evidence>
<evidence type="ECO:0000305" key="9"/>
<evidence type="ECO:0000312" key="10">
    <source>
        <dbReference type="EMBL" id="AAL27004.1"/>
    </source>
</evidence>
<evidence type="ECO:0000312" key="11">
    <source>
        <dbReference type="EMBL" id="CAB01235.2"/>
    </source>
</evidence>
<evidence type="ECO:0000312" key="12">
    <source>
        <dbReference type="WormBase" id="M04B2.1"/>
    </source>
</evidence>
<sequence length="870" mass="97450">MVTADETVLATTTNTTSMSVEPTDPRSAGESSSDSEPDTIEQLKAEQREVMADAANGSEVNGNQENGKEEAASADVEVIEIDDTEESTDPSPDGSDENGDAASTSVPIEEEARKKDEGASEVTVASSEIEQDDDGDVMEITEEPNGKSEDTANGTVTEEVLDEEEPEPSVNGTTEIATEKEPEDSSMPVEQNGKGVKRPVECIELDDDDDDEIQEISTPAPAKKAKIDDVKATSVPEEDNNEQAQKRLLDKLEEYVKEQKDQPSSKSRKVLDTLLGAINAQVQKEPLSVRKLILDKVLVLPNTISFPPSQVCDLLIEHDPEMPLTKVINRMFGEERPKLSDSEKRERAQLKQHNPVPNMTKLLVDIGQDLVQEATYCDIVHAKNLPEVPKNLETYKQVAAQLKPVWETLKRKNEPYKLKMHRCDVCGFQTESKLVMSTHKENLHFTGSKFQCTMCKETDTSEQRMKDHYFETHLVIAKSEEKESKYPCAICEEDFNFKGVREQHYKQCKKDYIRIRNIMMPKQDDHLYINRWLWERPQLDPSILQQQQQAALQQAQQKKQQQLLHQQQAAQAAAAAQLLRKQQLQQQQQQQQARLREQQQAAQFRQVAQLLQQQSAQAQRAQQNQGNVNHNTLIAAMQASLRRGGQQGNSLAVSQLLQKQMAALKSQQGAQQLQAAVNSMRSQNSQKTPTHRSSKLVTTPSHATVGSSSAPTFVCEICDASVQEKEKYLQHLQTTHKQMVGKVLQDMSQGAPLACSRCRDRFWTYEGLERHLVMSHGLVTADLLLKAQKKEDGGRCKTCGKNYAFNMLQHLVADHQVKLCSAEIMYSCDVCAFKCSSYQTLEAHLTSNHPKGDKKTSTPAKKDDCITLDD</sequence>
<name>MEP1_CAEEL</name>
<keyword id="KW-0217">Developmental protein</keyword>
<keyword id="KW-0221">Differentiation</keyword>
<keyword id="KW-0334">Gonadal differentiation</keyword>
<keyword id="KW-0479">Metal-binding</keyword>
<keyword id="KW-0539">Nucleus</keyword>
<keyword id="KW-1185">Reference proteome</keyword>
<keyword id="KW-0677">Repeat</keyword>
<keyword id="KW-0678">Repressor</keyword>
<keyword id="KW-0694">RNA-binding</keyword>
<keyword id="KW-0726">Sexual differentiation</keyword>
<keyword id="KW-0832">Ubl conjugation</keyword>
<keyword id="KW-0862">Zinc</keyword>
<keyword id="KW-0863">Zinc-finger</keyword>
<organism>
    <name type="scientific">Caenorhabditis elegans</name>
    <dbReference type="NCBI Taxonomy" id="6239"/>
    <lineage>
        <taxon>Eukaryota</taxon>
        <taxon>Metazoa</taxon>
        <taxon>Ecdysozoa</taxon>
        <taxon>Nematoda</taxon>
        <taxon>Chromadorea</taxon>
        <taxon>Rhabditida</taxon>
        <taxon>Rhabditina</taxon>
        <taxon>Rhabditomorpha</taxon>
        <taxon>Rhabditoidea</taxon>
        <taxon>Rhabditidae</taxon>
        <taxon>Peloderinae</taxon>
        <taxon>Caenorhabditis</taxon>
    </lineage>
</organism>
<reference evidence="9 10" key="1">
    <citation type="journal article" date="2002" name="RNA">
        <title>The MEP-1 zinc-finger protein acts with MOG DEAH box proteins to control gene expression via the fem-3 3' untranslated region in Caenorhabditis elegans.</title>
        <authorList>
            <person name="Belfiore M."/>
            <person name="Mathies L.D."/>
            <person name="Pugnale P."/>
            <person name="Moulder G."/>
            <person name="Barstead R."/>
            <person name="Kimble J."/>
            <person name="Puoti A."/>
        </authorList>
    </citation>
    <scope>NUCLEOTIDE SEQUENCE [MRNA]</scope>
    <scope>FUNCTION</scope>
    <scope>INTERACTION WITH MOG-1; MOG-4 AND MOG-5</scope>
    <scope>SUBCELLULAR LOCATION</scope>
    <scope>TISSUE SPECIFICITY</scope>
    <scope>DEVELOPMENTAL STAGE</scope>
    <scope>DISRUPTION PHENOTYPE</scope>
</reference>
<reference evidence="11" key="2">
    <citation type="journal article" date="1998" name="Science">
        <title>Genome sequence of the nematode C. elegans: a platform for investigating biology.</title>
        <authorList>
            <consortium name="The C. elegans sequencing consortium"/>
        </authorList>
    </citation>
    <scope>NUCLEOTIDE SEQUENCE [LARGE SCALE GENOMIC DNA]</scope>
    <source>
        <strain>Bristol N2</strain>
    </source>
</reference>
<reference evidence="9" key="3">
    <citation type="journal article" date="2002" name="Cell">
        <title>MEP-1 and a homolog of the NURD complex component Mi-2 act together to maintain germline-soma distinctions in C. elegans.</title>
        <authorList>
            <person name="Unhavaithaya Y."/>
            <person name="Shin T.H."/>
            <person name="Miliaras N."/>
            <person name="Lee J."/>
            <person name="Oyama T."/>
            <person name="Mello C.C."/>
        </authorList>
    </citation>
    <scope>FUNCTION</scope>
    <scope>INTERACTION WITH HDA-1; LET-418 AND PIE-1</scope>
</reference>
<reference evidence="9" key="4">
    <citation type="journal article" date="2003" name="Mol. Biol. Cell">
        <title>Caenorhabditis elegans UNC-98, a C2H2 Zn finger protein, is a novel partner of UNC-97/PINCH in muscle adhesion complexes.</title>
        <authorList>
            <person name="Mercer K.B."/>
            <person name="Flaherty D.B."/>
            <person name="Miller R.K."/>
            <person name="Qadota H."/>
            <person name="Tinley T.L."/>
            <person name="Moerman D.G."/>
            <person name="Benian G.M."/>
        </authorList>
    </citation>
    <scope>INTERACTION WITH UNC-98</scope>
</reference>
<reference evidence="9" key="5">
    <citation type="journal article" date="2004" name="Development">
        <title>Roles of the C. elegans cyclophilin-like protein MOG-6 in MEP-1 binding and germline fates.</title>
        <authorList>
            <person name="Belfiore M."/>
            <person name="Pugnale P."/>
            <person name="Saudan Z."/>
            <person name="Puoti A."/>
        </authorList>
    </citation>
    <scope>INTERACTION WITH MOG-6</scope>
</reference>
<reference evidence="9" key="6">
    <citation type="journal article" date="2005" name="Development">
        <title>Sumoylation of LIN-1 promotes transcriptional repression and inhibition of vulval cell fates.</title>
        <authorList>
            <person name="Leight E.R."/>
            <person name="Glossip D."/>
            <person name="Kornfeld K."/>
        </authorList>
    </citation>
    <scope>INTERACTION WITH LIN-1</scope>
</reference>
<reference evidence="9" key="7">
    <citation type="journal article" date="2021" name="Elife">
        <title>PIE-1 SUMOylation promotes germline fates and piRNA-dependent silencing in C. elegans.</title>
        <authorList>
            <person name="Kim H."/>
            <person name="Ding Y.H."/>
            <person name="Lu S."/>
            <person name="Zuo M.Q."/>
            <person name="Tan W."/>
            <person name="Conte D. Jr."/>
            <person name="Dong M.Q."/>
            <person name="Mello C.C."/>
        </authorList>
    </citation>
    <scope>SUMOYLATION</scope>
</reference>
<feature type="chain" id="PRO_0000308521" description="MOG interacting and ectopic P-granules protein 1">
    <location>
        <begin position="1"/>
        <end position="870"/>
    </location>
</feature>
<feature type="zinc finger region" description="C2H2-type 1" evidence="1">
    <location>
        <begin position="421"/>
        <end position="444"/>
    </location>
</feature>
<feature type="zinc finger region" description="C2H2-type 2" evidence="1">
    <location>
        <begin position="450"/>
        <end position="473"/>
    </location>
</feature>
<feature type="zinc finger region" description="CCHC-type" evidence="1">
    <location>
        <begin position="486"/>
        <end position="508"/>
    </location>
</feature>
<feature type="zinc finger region" description="C2H2-type 3" evidence="1">
    <location>
        <begin position="713"/>
        <end position="736"/>
    </location>
</feature>
<feature type="zinc finger region" description="C2H2-type 4" evidence="1">
    <location>
        <begin position="753"/>
        <end position="776"/>
    </location>
</feature>
<feature type="zinc finger region" description="C2H2-type 5" evidence="1">
    <location>
        <begin position="794"/>
        <end position="815"/>
    </location>
</feature>
<feature type="zinc finger region" description="C2H2-type 6" evidence="1">
    <location>
        <begin position="826"/>
        <end position="849"/>
    </location>
</feature>
<feature type="region of interest" description="Disordered" evidence="2">
    <location>
        <begin position="1"/>
        <end position="244"/>
    </location>
</feature>
<feature type="region of interest" description="Disordered" evidence="2">
    <location>
        <begin position="673"/>
        <end position="708"/>
    </location>
</feature>
<feature type="region of interest" description="Disordered" evidence="2">
    <location>
        <begin position="847"/>
        <end position="870"/>
    </location>
</feature>
<feature type="compositionally biased region" description="Polar residues" evidence="2">
    <location>
        <begin position="9"/>
        <end position="20"/>
    </location>
</feature>
<feature type="compositionally biased region" description="Basic and acidic residues" evidence="2">
    <location>
        <begin position="41"/>
        <end position="51"/>
    </location>
</feature>
<feature type="compositionally biased region" description="Acidic residues" evidence="2">
    <location>
        <begin position="77"/>
        <end position="99"/>
    </location>
</feature>
<feature type="compositionally biased region" description="Acidic residues" evidence="2">
    <location>
        <begin position="129"/>
        <end position="142"/>
    </location>
</feature>
<feature type="compositionally biased region" description="Acidic residues" evidence="2">
    <location>
        <begin position="203"/>
        <end position="214"/>
    </location>
</feature>
<feature type="compositionally biased region" description="Polar residues" evidence="2">
    <location>
        <begin position="673"/>
        <end position="688"/>
    </location>
</feature>
<feature type="compositionally biased region" description="Polar residues" evidence="2">
    <location>
        <begin position="695"/>
        <end position="708"/>
    </location>
</feature>
<feature type="compositionally biased region" description="Basic and acidic residues" evidence="2">
    <location>
        <begin position="850"/>
        <end position="870"/>
    </location>
</feature>
<proteinExistence type="evidence at protein level"/>